<feature type="chain" id="PRO_0000127345" description="Myogenic factor 5">
    <location>
        <begin position="1"/>
        <end position="255"/>
    </location>
</feature>
<feature type="domain" description="bHLH" evidence="1">
    <location>
        <begin position="83"/>
        <end position="134"/>
    </location>
</feature>
<feature type="region of interest" description="Disordered" evidence="2">
    <location>
        <begin position="226"/>
        <end position="249"/>
    </location>
</feature>
<reference key="1">
    <citation type="journal article" date="1992" name="Nucleic Acids Res.">
        <title>The MyoD family of myogenic factors is regulated by electrical activity: isolation and characterization of a mouse Myf-5 cDNA.</title>
        <authorList>
            <person name="Buonanno A."/>
            <person name="Apone L."/>
            <person name="Morasso M.I."/>
            <person name="Beers R."/>
            <person name="Brenner H.R."/>
            <person name="Eftimie R."/>
        </authorList>
    </citation>
    <scope>NUCLEOTIDE SEQUENCE [MRNA]</scope>
    <source>
        <strain>C3H/HeJ</strain>
        <tissue>Skeletal muscle</tissue>
        <tissue>Smooth muscle</tissue>
    </source>
</reference>
<reference key="2">
    <citation type="journal article" date="2005" name="Science">
        <title>The transcriptional landscape of the mammalian genome.</title>
        <authorList>
            <person name="Carninci P."/>
            <person name="Kasukawa T."/>
            <person name="Katayama S."/>
            <person name="Gough J."/>
            <person name="Frith M.C."/>
            <person name="Maeda N."/>
            <person name="Oyama R."/>
            <person name="Ravasi T."/>
            <person name="Lenhard B."/>
            <person name="Wells C."/>
            <person name="Kodzius R."/>
            <person name="Shimokawa K."/>
            <person name="Bajic V.B."/>
            <person name="Brenner S.E."/>
            <person name="Batalov S."/>
            <person name="Forrest A.R."/>
            <person name="Zavolan M."/>
            <person name="Davis M.J."/>
            <person name="Wilming L.G."/>
            <person name="Aidinis V."/>
            <person name="Allen J.E."/>
            <person name="Ambesi-Impiombato A."/>
            <person name="Apweiler R."/>
            <person name="Aturaliya R.N."/>
            <person name="Bailey T.L."/>
            <person name="Bansal M."/>
            <person name="Baxter L."/>
            <person name="Beisel K.W."/>
            <person name="Bersano T."/>
            <person name="Bono H."/>
            <person name="Chalk A.M."/>
            <person name="Chiu K.P."/>
            <person name="Choudhary V."/>
            <person name="Christoffels A."/>
            <person name="Clutterbuck D.R."/>
            <person name="Crowe M.L."/>
            <person name="Dalla E."/>
            <person name="Dalrymple B.P."/>
            <person name="de Bono B."/>
            <person name="Della Gatta G."/>
            <person name="di Bernardo D."/>
            <person name="Down T."/>
            <person name="Engstrom P."/>
            <person name="Fagiolini M."/>
            <person name="Faulkner G."/>
            <person name="Fletcher C.F."/>
            <person name="Fukushima T."/>
            <person name="Furuno M."/>
            <person name="Futaki S."/>
            <person name="Gariboldi M."/>
            <person name="Georgii-Hemming P."/>
            <person name="Gingeras T.R."/>
            <person name="Gojobori T."/>
            <person name="Green R.E."/>
            <person name="Gustincich S."/>
            <person name="Harbers M."/>
            <person name="Hayashi Y."/>
            <person name="Hensch T.K."/>
            <person name="Hirokawa N."/>
            <person name="Hill D."/>
            <person name="Huminiecki L."/>
            <person name="Iacono M."/>
            <person name="Ikeo K."/>
            <person name="Iwama A."/>
            <person name="Ishikawa T."/>
            <person name="Jakt M."/>
            <person name="Kanapin A."/>
            <person name="Katoh M."/>
            <person name="Kawasawa Y."/>
            <person name="Kelso J."/>
            <person name="Kitamura H."/>
            <person name="Kitano H."/>
            <person name="Kollias G."/>
            <person name="Krishnan S.P."/>
            <person name="Kruger A."/>
            <person name="Kummerfeld S.K."/>
            <person name="Kurochkin I.V."/>
            <person name="Lareau L.F."/>
            <person name="Lazarevic D."/>
            <person name="Lipovich L."/>
            <person name="Liu J."/>
            <person name="Liuni S."/>
            <person name="McWilliam S."/>
            <person name="Madan Babu M."/>
            <person name="Madera M."/>
            <person name="Marchionni L."/>
            <person name="Matsuda H."/>
            <person name="Matsuzawa S."/>
            <person name="Miki H."/>
            <person name="Mignone F."/>
            <person name="Miyake S."/>
            <person name="Morris K."/>
            <person name="Mottagui-Tabar S."/>
            <person name="Mulder N."/>
            <person name="Nakano N."/>
            <person name="Nakauchi H."/>
            <person name="Ng P."/>
            <person name="Nilsson R."/>
            <person name="Nishiguchi S."/>
            <person name="Nishikawa S."/>
            <person name="Nori F."/>
            <person name="Ohara O."/>
            <person name="Okazaki Y."/>
            <person name="Orlando V."/>
            <person name="Pang K.C."/>
            <person name="Pavan W.J."/>
            <person name="Pavesi G."/>
            <person name="Pesole G."/>
            <person name="Petrovsky N."/>
            <person name="Piazza S."/>
            <person name="Reed J."/>
            <person name="Reid J.F."/>
            <person name="Ring B.Z."/>
            <person name="Ringwald M."/>
            <person name="Rost B."/>
            <person name="Ruan Y."/>
            <person name="Salzberg S.L."/>
            <person name="Sandelin A."/>
            <person name="Schneider C."/>
            <person name="Schoenbach C."/>
            <person name="Sekiguchi K."/>
            <person name="Semple C.A."/>
            <person name="Seno S."/>
            <person name="Sessa L."/>
            <person name="Sheng Y."/>
            <person name="Shibata Y."/>
            <person name="Shimada H."/>
            <person name="Shimada K."/>
            <person name="Silva D."/>
            <person name="Sinclair B."/>
            <person name="Sperling S."/>
            <person name="Stupka E."/>
            <person name="Sugiura K."/>
            <person name="Sultana R."/>
            <person name="Takenaka Y."/>
            <person name="Taki K."/>
            <person name="Tammoja K."/>
            <person name="Tan S.L."/>
            <person name="Tang S."/>
            <person name="Taylor M.S."/>
            <person name="Tegner J."/>
            <person name="Teichmann S.A."/>
            <person name="Ueda H.R."/>
            <person name="van Nimwegen E."/>
            <person name="Verardo R."/>
            <person name="Wei C.L."/>
            <person name="Yagi K."/>
            <person name="Yamanishi H."/>
            <person name="Zabarovsky E."/>
            <person name="Zhu S."/>
            <person name="Zimmer A."/>
            <person name="Hide W."/>
            <person name="Bult C."/>
            <person name="Grimmond S.M."/>
            <person name="Teasdale R.D."/>
            <person name="Liu E.T."/>
            <person name="Brusic V."/>
            <person name="Quackenbush J."/>
            <person name="Wahlestedt C."/>
            <person name="Mattick J.S."/>
            <person name="Hume D.A."/>
            <person name="Kai C."/>
            <person name="Sasaki D."/>
            <person name="Tomaru Y."/>
            <person name="Fukuda S."/>
            <person name="Kanamori-Katayama M."/>
            <person name="Suzuki M."/>
            <person name="Aoki J."/>
            <person name="Arakawa T."/>
            <person name="Iida J."/>
            <person name="Imamura K."/>
            <person name="Itoh M."/>
            <person name="Kato T."/>
            <person name="Kawaji H."/>
            <person name="Kawagashira N."/>
            <person name="Kawashima T."/>
            <person name="Kojima M."/>
            <person name="Kondo S."/>
            <person name="Konno H."/>
            <person name="Nakano K."/>
            <person name="Ninomiya N."/>
            <person name="Nishio T."/>
            <person name="Okada M."/>
            <person name="Plessy C."/>
            <person name="Shibata K."/>
            <person name="Shiraki T."/>
            <person name="Suzuki S."/>
            <person name="Tagami M."/>
            <person name="Waki K."/>
            <person name="Watahiki A."/>
            <person name="Okamura-Oho Y."/>
            <person name="Suzuki H."/>
            <person name="Kawai J."/>
            <person name="Hayashizaki Y."/>
        </authorList>
    </citation>
    <scope>NUCLEOTIDE SEQUENCE [LARGE SCALE MRNA]</scope>
    <source>
        <strain>C57BL/6J</strain>
        <tissue>Embryo</tissue>
    </source>
</reference>
<reference key="3">
    <citation type="journal article" date="2011" name="Skelet. Muscle">
        <title>Sequential association of myogenic regulatory factors and E proteins at muscle-specific genes.</title>
        <authorList>
            <person name="Londhe P."/>
            <person name="Davie J.K."/>
        </authorList>
    </citation>
    <scope>FUNCTION</scope>
    <scope>PROMOTER BINDING</scope>
</reference>
<accession>P24699</accession>
<accession>Q543W7</accession>
<organism>
    <name type="scientific">Mus musculus</name>
    <name type="common">Mouse</name>
    <dbReference type="NCBI Taxonomy" id="10090"/>
    <lineage>
        <taxon>Eukaryota</taxon>
        <taxon>Metazoa</taxon>
        <taxon>Chordata</taxon>
        <taxon>Craniata</taxon>
        <taxon>Vertebrata</taxon>
        <taxon>Euteleostomi</taxon>
        <taxon>Mammalia</taxon>
        <taxon>Eutheria</taxon>
        <taxon>Euarchontoglires</taxon>
        <taxon>Glires</taxon>
        <taxon>Rodentia</taxon>
        <taxon>Myomorpha</taxon>
        <taxon>Muroidea</taxon>
        <taxon>Muridae</taxon>
        <taxon>Murinae</taxon>
        <taxon>Mus</taxon>
        <taxon>Mus</taxon>
    </lineage>
</organism>
<evidence type="ECO:0000255" key="1">
    <source>
        <dbReference type="PROSITE-ProRule" id="PRU00981"/>
    </source>
</evidence>
<evidence type="ECO:0000256" key="2">
    <source>
        <dbReference type="SAM" id="MobiDB-lite"/>
    </source>
</evidence>
<evidence type="ECO:0000269" key="3">
    <source>
    </source>
</evidence>
<name>MYF5_MOUSE</name>
<comment type="function">
    <text evidence="3">Acts as a transcriptional activator that promotes transcription of muscle-specific target genes and plays a role in muscle differentiation. Together with MYOG and MYOD1, co-occupies muscle-specific gene promoter core region during myogenesis. Induces fibroblasts to differentiate into myoblasts. Probable sequence specific DNA-binding protein.</text>
</comment>
<comment type="subunit">
    <text>Efficient DNA binding requires dimerization with another bHLH protein.</text>
</comment>
<comment type="subcellular location">
    <subcellularLocation>
        <location>Nucleus</location>
    </subcellularLocation>
</comment>
<proteinExistence type="evidence at protein level"/>
<sequence length="255" mass="28229">MDMTDGCQFSPSEYFYEGSCIPSPEDEFGDQFEPRVAAFGAHKAELQGSDDEEHVRAPTGHHQAGHCLMWACKACKRKSTTMDRRKAATMRERRRLKKVNQAFETLKRCTTTNPNQRLPKVEILRNAIRYIESLQELLREQVENYYSLPGQSCSEPTSPTSNCSDGMPECNSPVWSRKNSSFDSIYCPDVSNACAADKSSVSSLDCLSSIVDRITSTEPSELALQDTASLSPATSANSQPATPGPSSSRLIYHVL</sequence>
<gene>
    <name type="primary">Myf5</name>
    <name type="synonym">Myf-5</name>
</gene>
<keyword id="KW-0010">Activator</keyword>
<keyword id="KW-0217">Developmental protein</keyword>
<keyword id="KW-0221">Differentiation</keyword>
<keyword id="KW-0238">DNA-binding</keyword>
<keyword id="KW-0517">Myogenesis</keyword>
<keyword id="KW-0539">Nucleus</keyword>
<keyword id="KW-1185">Reference proteome</keyword>
<keyword id="KW-0804">Transcription</keyword>
<keyword id="KW-0805">Transcription regulation</keyword>
<dbReference type="EMBL" id="X56182">
    <property type="protein sequence ID" value="CAA39643.1"/>
    <property type="molecule type" value="mRNA"/>
</dbReference>
<dbReference type="EMBL" id="AK044894">
    <property type="protein sequence ID" value="BAC32132.1"/>
    <property type="molecule type" value="mRNA"/>
</dbReference>
<dbReference type="EMBL" id="AK083402">
    <property type="protein sequence ID" value="BAC38902.1"/>
    <property type="molecule type" value="mRNA"/>
</dbReference>
<dbReference type="CCDS" id="CCDS24161.1"/>
<dbReference type="PIR" id="S22825">
    <property type="entry name" value="S22825"/>
</dbReference>
<dbReference type="RefSeq" id="NP_032682.1">
    <property type="nucleotide sequence ID" value="NM_008656.5"/>
</dbReference>
<dbReference type="RefSeq" id="XP_006513382.1">
    <property type="nucleotide sequence ID" value="XM_006513319.3"/>
</dbReference>
<dbReference type="SMR" id="P24699"/>
<dbReference type="BioGRID" id="201641">
    <property type="interactions" value="2"/>
</dbReference>
<dbReference type="FunCoup" id="P24699">
    <property type="interactions" value="1920"/>
</dbReference>
<dbReference type="STRING" id="10090.ENSMUSP00000000445"/>
<dbReference type="GlyGen" id="P24699">
    <property type="glycosylation" value="1 site"/>
</dbReference>
<dbReference type="iPTMnet" id="P24699"/>
<dbReference type="PhosphoSitePlus" id="P24699"/>
<dbReference type="PaxDb" id="10090-ENSMUSP00000000445"/>
<dbReference type="Antibodypedia" id="17297">
    <property type="antibodies" value="456 antibodies from 36 providers"/>
</dbReference>
<dbReference type="DNASU" id="17877"/>
<dbReference type="Ensembl" id="ENSMUST00000000445.2">
    <property type="protein sequence ID" value="ENSMUSP00000000445.2"/>
    <property type="gene ID" value="ENSMUSG00000000435.2"/>
</dbReference>
<dbReference type="GeneID" id="17877"/>
<dbReference type="KEGG" id="mmu:17877"/>
<dbReference type="UCSC" id="uc007gyz.1">
    <property type="organism name" value="mouse"/>
</dbReference>
<dbReference type="AGR" id="MGI:97252"/>
<dbReference type="CTD" id="4617"/>
<dbReference type="MGI" id="MGI:97252">
    <property type="gene designation" value="Myf5"/>
</dbReference>
<dbReference type="VEuPathDB" id="HostDB:ENSMUSG00000000435"/>
<dbReference type="eggNOG" id="KOG3960">
    <property type="taxonomic scope" value="Eukaryota"/>
</dbReference>
<dbReference type="GeneTree" id="ENSGT00950000182959"/>
<dbReference type="HOGENOM" id="CLU_066887_0_0_1"/>
<dbReference type="InParanoid" id="P24699"/>
<dbReference type="OMA" id="MAECNSP"/>
<dbReference type="OrthoDB" id="10049614at2759"/>
<dbReference type="PhylomeDB" id="P24699"/>
<dbReference type="TreeFam" id="TF316344"/>
<dbReference type="Reactome" id="R-MMU-525793">
    <property type="pathway name" value="Myogenesis"/>
</dbReference>
<dbReference type="BioGRID-ORCS" id="17877">
    <property type="hits" value="1 hit in 76 CRISPR screens"/>
</dbReference>
<dbReference type="PRO" id="PR:P24699"/>
<dbReference type="Proteomes" id="UP000000589">
    <property type="component" value="Chromosome 10"/>
</dbReference>
<dbReference type="RNAct" id="P24699">
    <property type="molecule type" value="protein"/>
</dbReference>
<dbReference type="Bgee" id="ENSMUSG00000000435">
    <property type="expression patterns" value="Expressed in myotome and 86 other cell types or tissues"/>
</dbReference>
<dbReference type="ExpressionAtlas" id="P24699">
    <property type="expression patterns" value="baseline and differential"/>
</dbReference>
<dbReference type="GO" id="GO:0005654">
    <property type="term" value="C:nucleoplasm"/>
    <property type="evidence" value="ECO:0007669"/>
    <property type="project" value="Ensembl"/>
</dbReference>
<dbReference type="GO" id="GO:0005634">
    <property type="term" value="C:nucleus"/>
    <property type="evidence" value="ECO:0000304"/>
    <property type="project" value="MGI"/>
</dbReference>
<dbReference type="GO" id="GO:0001228">
    <property type="term" value="F:DNA-binding transcription activator activity, RNA polymerase II-specific"/>
    <property type="evidence" value="ECO:0000314"/>
    <property type="project" value="MGI"/>
</dbReference>
<dbReference type="GO" id="GO:0000981">
    <property type="term" value="F:DNA-binding transcription factor activity, RNA polymerase II-specific"/>
    <property type="evidence" value="ECO:0000304"/>
    <property type="project" value="MGI"/>
</dbReference>
<dbReference type="GO" id="GO:0046983">
    <property type="term" value="F:protein dimerization activity"/>
    <property type="evidence" value="ECO:0007669"/>
    <property type="project" value="InterPro"/>
</dbReference>
<dbReference type="GO" id="GO:0043565">
    <property type="term" value="F:sequence-specific DNA binding"/>
    <property type="evidence" value="ECO:0000314"/>
    <property type="project" value="MGI"/>
</dbReference>
<dbReference type="GO" id="GO:0043010">
    <property type="term" value="P:camera-type eye development"/>
    <property type="evidence" value="ECO:0000315"/>
    <property type="project" value="MGI"/>
</dbReference>
<dbReference type="GO" id="GO:0001502">
    <property type="term" value="P:cartilage condensation"/>
    <property type="evidence" value="ECO:0000315"/>
    <property type="project" value="MGI"/>
</dbReference>
<dbReference type="GO" id="GO:0048704">
    <property type="term" value="P:embryonic skeletal system morphogenesis"/>
    <property type="evidence" value="ECO:0000315"/>
    <property type="project" value="MGI"/>
</dbReference>
<dbReference type="GO" id="GO:0030198">
    <property type="term" value="P:extracellular matrix organization"/>
    <property type="evidence" value="ECO:0000315"/>
    <property type="project" value="MGI"/>
</dbReference>
<dbReference type="GO" id="GO:0007517">
    <property type="term" value="P:muscle organ development"/>
    <property type="evidence" value="ECO:0000315"/>
    <property type="project" value="MGI"/>
</dbReference>
<dbReference type="GO" id="GO:0048644">
    <property type="term" value="P:muscle organ morphogenesis"/>
    <property type="evidence" value="ECO:0000316"/>
    <property type="project" value="MGI"/>
</dbReference>
<dbReference type="GO" id="GO:0060415">
    <property type="term" value="P:muscle tissue morphogenesis"/>
    <property type="evidence" value="ECO:0000315"/>
    <property type="project" value="MGI"/>
</dbReference>
<dbReference type="GO" id="GO:0001503">
    <property type="term" value="P:ossification"/>
    <property type="evidence" value="ECO:0000315"/>
    <property type="project" value="MGI"/>
</dbReference>
<dbReference type="GO" id="GO:0045944">
    <property type="term" value="P:positive regulation of transcription by RNA polymerase II"/>
    <property type="evidence" value="ECO:0000314"/>
    <property type="project" value="MGI"/>
</dbReference>
<dbReference type="GO" id="GO:0001952">
    <property type="term" value="P:regulation of cell-matrix adhesion"/>
    <property type="evidence" value="ECO:0000315"/>
    <property type="project" value="MGI"/>
</dbReference>
<dbReference type="GO" id="GO:0035914">
    <property type="term" value="P:skeletal muscle cell differentiation"/>
    <property type="evidence" value="ECO:0000315"/>
    <property type="project" value="MGI"/>
</dbReference>
<dbReference type="GO" id="GO:0007519">
    <property type="term" value="P:skeletal muscle tissue development"/>
    <property type="evidence" value="ECO:0000315"/>
    <property type="project" value="MGI"/>
</dbReference>
<dbReference type="GO" id="GO:0001756">
    <property type="term" value="P:somitogenesis"/>
    <property type="evidence" value="ECO:0000315"/>
    <property type="project" value="MGI"/>
</dbReference>
<dbReference type="CDD" id="cd18937">
    <property type="entry name" value="bHLH_TS_Myf5"/>
    <property type="match status" value="1"/>
</dbReference>
<dbReference type="FunFam" id="4.10.280.10:FF:000005">
    <property type="entry name" value="Myogenic factor"/>
    <property type="match status" value="1"/>
</dbReference>
<dbReference type="Gene3D" id="4.10.280.10">
    <property type="entry name" value="Helix-loop-helix DNA-binding domain"/>
    <property type="match status" value="1"/>
</dbReference>
<dbReference type="InterPro" id="IPR011598">
    <property type="entry name" value="bHLH_dom"/>
</dbReference>
<dbReference type="InterPro" id="IPR036638">
    <property type="entry name" value="HLH_DNA-bd_sf"/>
</dbReference>
<dbReference type="InterPro" id="IPR022032">
    <property type="entry name" value="Myf5"/>
</dbReference>
<dbReference type="InterPro" id="IPR002546">
    <property type="entry name" value="MyoD_N"/>
</dbReference>
<dbReference type="InterPro" id="IPR039704">
    <property type="entry name" value="Myogenic_factor"/>
</dbReference>
<dbReference type="PANTHER" id="PTHR11534">
    <property type="entry name" value="MYOGENIC FACTOR"/>
    <property type="match status" value="1"/>
</dbReference>
<dbReference type="PANTHER" id="PTHR11534:SF3">
    <property type="entry name" value="MYOGENIC FACTOR 5"/>
    <property type="match status" value="1"/>
</dbReference>
<dbReference type="Pfam" id="PF01586">
    <property type="entry name" value="Basic"/>
    <property type="match status" value="1"/>
</dbReference>
<dbReference type="Pfam" id="PF00010">
    <property type="entry name" value="HLH"/>
    <property type="match status" value="1"/>
</dbReference>
<dbReference type="Pfam" id="PF12232">
    <property type="entry name" value="Myf5"/>
    <property type="match status" value="1"/>
</dbReference>
<dbReference type="SMART" id="SM00520">
    <property type="entry name" value="BASIC"/>
    <property type="match status" value="1"/>
</dbReference>
<dbReference type="SMART" id="SM00353">
    <property type="entry name" value="HLH"/>
    <property type="match status" value="1"/>
</dbReference>
<dbReference type="SUPFAM" id="SSF47459">
    <property type="entry name" value="HLH, helix-loop-helix DNA-binding domain"/>
    <property type="match status" value="1"/>
</dbReference>
<dbReference type="PROSITE" id="PS50888">
    <property type="entry name" value="BHLH"/>
    <property type="match status" value="1"/>
</dbReference>
<protein>
    <recommendedName>
        <fullName>Myogenic factor 5</fullName>
        <shortName>Myf-5</shortName>
    </recommendedName>
</protein>